<organism>
    <name type="scientific">Yarrowia lipolytica (strain CLIB 122 / E 150)</name>
    <name type="common">Yeast</name>
    <name type="synonym">Candida lipolytica</name>
    <dbReference type="NCBI Taxonomy" id="284591"/>
    <lineage>
        <taxon>Eukaryota</taxon>
        <taxon>Fungi</taxon>
        <taxon>Dikarya</taxon>
        <taxon>Ascomycota</taxon>
        <taxon>Saccharomycotina</taxon>
        <taxon>Dipodascomycetes</taxon>
        <taxon>Dipodascales</taxon>
        <taxon>Dipodascales incertae sedis</taxon>
        <taxon>Yarrowia</taxon>
    </lineage>
</organism>
<accession>Q6CDN5</accession>
<keyword id="KW-0067">ATP-binding</keyword>
<keyword id="KW-0347">Helicase</keyword>
<keyword id="KW-0378">Hydrolase</keyword>
<keyword id="KW-0547">Nucleotide-binding</keyword>
<keyword id="KW-0539">Nucleus</keyword>
<keyword id="KW-1185">Reference proteome</keyword>
<keyword id="KW-0690">Ribosome biogenesis</keyword>
<keyword id="KW-0694">RNA-binding</keyword>
<keyword id="KW-0698">rRNA processing</keyword>
<evidence type="ECO:0000250" key="1"/>
<evidence type="ECO:0000255" key="2">
    <source>
        <dbReference type="PROSITE-ProRule" id="PRU00541"/>
    </source>
</evidence>
<evidence type="ECO:0000255" key="3">
    <source>
        <dbReference type="PROSITE-ProRule" id="PRU00542"/>
    </source>
</evidence>
<evidence type="ECO:0000256" key="4">
    <source>
        <dbReference type="SAM" id="MobiDB-lite"/>
    </source>
</evidence>
<evidence type="ECO:0000305" key="5"/>
<comment type="function">
    <text evidence="1">ATP-binding RNA helicase involved in the biogenesis of 60S ribosomal subunits and is required for the normal formation of 25S and 5.8S rRNAs.</text>
</comment>
<comment type="catalytic activity">
    <reaction>
        <text>ATP + H2O = ADP + phosphate + H(+)</text>
        <dbReference type="Rhea" id="RHEA:13065"/>
        <dbReference type="ChEBI" id="CHEBI:15377"/>
        <dbReference type="ChEBI" id="CHEBI:15378"/>
        <dbReference type="ChEBI" id="CHEBI:30616"/>
        <dbReference type="ChEBI" id="CHEBI:43474"/>
        <dbReference type="ChEBI" id="CHEBI:456216"/>
        <dbReference type="EC" id="3.6.4.13"/>
    </reaction>
</comment>
<comment type="subunit">
    <text evidence="1">Associated with pre-ribosomal particles.</text>
</comment>
<comment type="subcellular location">
    <subcellularLocation>
        <location evidence="1">Nucleus</location>
        <location evidence="1">Nucleolus</location>
    </subcellularLocation>
</comment>
<comment type="domain">
    <text>The Q motif is unique to and characteristic of the DEAD box family of RNA helicases and controls ATP binding and hydrolysis.</text>
</comment>
<comment type="similarity">
    <text evidence="5">Belongs to the DEAD box helicase family. DDX51/DBP6 subfamily.</text>
</comment>
<reference key="1">
    <citation type="journal article" date="2004" name="Nature">
        <title>Genome evolution in yeasts.</title>
        <authorList>
            <person name="Dujon B."/>
            <person name="Sherman D."/>
            <person name="Fischer G."/>
            <person name="Durrens P."/>
            <person name="Casaregola S."/>
            <person name="Lafontaine I."/>
            <person name="de Montigny J."/>
            <person name="Marck C."/>
            <person name="Neuveglise C."/>
            <person name="Talla E."/>
            <person name="Goffard N."/>
            <person name="Frangeul L."/>
            <person name="Aigle M."/>
            <person name="Anthouard V."/>
            <person name="Babour A."/>
            <person name="Barbe V."/>
            <person name="Barnay S."/>
            <person name="Blanchin S."/>
            <person name="Beckerich J.-M."/>
            <person name="Beyne E."/>
            <person name="Bleykasten C."/>
            <person name="Boisrame A."/>
            <person name="Boyer J."/>
            <person name="Cattolico L."/>
            <person name="Confanioleri F."/>
            <person name="de Daruvar A."/>
            <person name="Despons L."/>
            <person name="Fabre E."/>
            <person name="Fairhead C."/>
            <person name="Ferry-Dumazet H."/>
            <person name="Groppi A."/>
            <person name="Hantraye F."/>
            <person name="Hennequin C."/>
            <person name="Jauniaux N."/>
            <person name="Joyet P."/>
            <person name="Kachouri R."/>
            <person name="Kerrest A."/>
            <person name="Koszul R."/>
            <person name="Lemaire M."/>
            <person name="Lesur I."/>
            <person name="Ma L."/>
            <person name="Muller H."/>
            <person name="Nicaud J.-M."/>
            <person name="Nikolski M."/>
            <person name="Oztas S."/>
            <person name="Ozier-Kalogeropoulos O."/>
            <person name="Pellenz S."/>
            <person name="Potier S."/>
            <person name="Richard G.-F."/>
            <person name="Straub M.-L."/>
            <person name="Suleau A."/>
            <person name="Swennen D."/>
            <person name="Tekaia F."/>
            <person name="Wesolowski-Louvel M."/>
            <person name="Westhof E."/>
            <person name="Wirth B."/>
            <person name="Zeniou-Meyer M."/>
            <person name="Zivanovic Y."/>
            <person name="Bolotin-Fukuhara M."/>
            <person name="Thierry A."/>
            <person name="Bouchier C."/>
            <person name="Caudron B."/>
            <person name="Scarpelli C."/>
            <person name="Gaillardin C."/>
            <person name="Weissenbach J."/>
            <person name="Wincker P."/>
            <person name="Souciet J.-L."/>
        </authorList>
    </citation>
    <scope>NUCLEOTIDE SEQUENCE [LARGE SCALE GENOMIC DNA]</scope>
    <source>
        <strain>CLIB 122 / E 150</strain>
    </source>
</reference>
<protein>
    <recommendedName>
        <fullName>ATP-dependent RNA helicase DBP6</fullName>
        <ecNumber>3.6.4.13</ecNumber>
    </recommendedName>
</protein>
<proteinExistence type="inferred from homology"/>
<name>DBP6_YARLI</name>
<dbReference type="EC" id="3.6.4.13"/>
<dbReference type="EMBL" id="CR382128">
    <property type="protein sequence ID" value="CAG83480.1"/>
    <property type="molecule type" value="Genomic_DNA"/>
</dbReference>
<dbReference type="RefSeq" id="XP_501227.1">
    <property type="nucleotide sequence ID" value="XM_501227.1"/>
</dbReference>
<dbReference type="SMR" id="Q6CDN5"/>
<dbReference type="FunCoup" id="Q6CDN5">
    <property type="interactions" value="905"/>
</dbReference>
<dbReference type="STRING" id="284591.Q6CDN5"/>
<dbReference type="EnsemblFungi" id="CAG83480">
    <property type="protein sequence ID" value="CAG83480"/>
    <property type="gene ID" value="YALI0_B22572g"/>
</dbReference>
<dbReference type="KEGG" id="yli:2907481"/>
<dbReference type="VEuPathDB" id="FungiDB:YALI0_B22572g"/>
<dbReference type="HOGENOM" id="CLU_003041_15_3_1"/>
<dbReference type="InParanoid" id="Q6CDN5"/>
<dbReference type="OMA" id="KRMKIRH"/>
<dbReference type="OrthoDB" id="114195at4891"/>
<dbReference type="Proteomes" id="UP000001300">
    <property type="component" value="Chromosome B"/>
</dbReference>
<dbReference type="GO" id="GO:0005730">
    <property type="term" value="C:nucleolus"/>
    <property type="evidence" value="ECO:0007669"/>
    <property type="project" value="UniProtKB-SubCell"/>
</dbReference>
<dbReference type="GO" id="GO:0005634">
    <property type="term" value="C:nucleus"/>
    <property type="evidence" value="ECO:0000318"/>
    <property type="project" value="GO_Central"/>
</dbReference>
<dbReference type="GO" id="GO:0005524">
    <property type="term" value="F:ATP binding"/>
    <property type="evidence" value="ECO:0007669"/>
    <property type="project" value="UniProtKB-KW"/>
</dbReference>
<dbReference type="GO" id="GO:0016887">
    <property type="term" value="F:ATP hydrolysis activity"/>
    <property type="evidence" value="ECO:0007669"/>
    <property type="project" value="RHEA"/>
</dbReference>
<dbReference type="GO" id="GO:0003723">
    <property type="term" value="F:RNA binding"/>
    <property type="evidence" value="ECO:0007669"/>
    <property type="project" value="UniProtKB-KW"/>
</dbReference>
<dbReference type="GO" id="GO:0003724">
    <property type="term" value="F:RNA helicase activity"/>
    <property type="evidence" value="ECO:0007669"/>
    <property type="project" value="UniProtKB-EC"/>
</dbReference>
<dbReference type="GO" id="GO:0006364">
    <property type="term" value="P:rRNA processing"/>
    <property type="evidence" value="ECO:0007669"/>
    <property type="project" value="UniProtKB-KW"/>
</dbReference>
<dbReference type="CDD" id="cd17956">
    <property type="entry name" value="DEADc_DDX51"/>
    <property type="match status" value="1"/>
</dbReference>
<dbReference type="CDD" id="cd18787">
    <property type="entry name" value="SF2_C_DEAD"/>
    <property type="match status" value="1"/>
</dbReference>
<dbReference type="Gene3D" id="3.40.50.300">
    <property type="entry name" value="P-loop containing nucleotide triphosphate hydrolases"/>
    <property type="match status" value="2"/>
</dbReference>
<dbReference type="InterPro" id="IPR011545">
    <property type="entry name" value="DEAD/DEAH_box_helicase_dom"/>
</dbReference>
<dbReference type="InterPro" id="IPR014001">
    <property type="entry name" value="Helicase_ATP-bd"/>
</dbReference>
<dbReference type="InterPro" id="IPR001650">
    <property type="entry name" value="Helicase_C-like"/>
</dbReference>
<dbReference type="InterPro" id="IPR027417">
    <property type="entry name" value="P-loop_NTPase"/>
</dbReference>
<dbReference type="InterPro" id="IPR000629">
    <property type="entry name" value="RNA-helicase_DEAD-box_CS"/>
</dbReference>
<dbReference type="InterPro" id="IPR014014">
    <property type="entry name" value="RNA_helicase_DEAD_Q_motif"/>
</dbReference>
<dbReference type="PANTHER" id="PTHR24031">
    <property type="entry name" value="RNA HELICASE"/>
    <property type="match status" value="1"/>
</dbReference>
<dbReference type="Pfam" id="PF00270">
    <property type="entry name" value="DEAD"/>
    <property type="match status" value="1"/>
</dbReference>
<dbReference type="Pfam" id="PF00271">
    <property type="entry name" value="Helicase_C"/>
    <property type="match status" value="1"/>
</dbReference>
<dbReference type="SMART" id="SM00487">
    <property type="entry name" value="DEXDc"/>
    <property type="match status" value="1"/>
</dbReference>
<dbReference type="SMART" id="SM00490">
    <property type="entry name" value="HELICc"/>
    <property type="match status" value="1"/>
</dbReference>
<dbReference type="SUPFAM" id="SSF52540">
    <property type="entry name" value="P-loop containing nucleoside triphosphate hydrolases"/>
    <property type="match status" value="1"/>
</dbReference>
<dbReference type="PROSITE" id="PS00039">
    <property type="entry name" value="DEAD_ATP_HELICASE"/>
    <property type="match status" value="1"/>
</dbReference>
<dbReference type="PROSITE" id="PS51192">
    <property type="entry name" value="HELICASE_ATP_BIND_1"/>
    <property type="match status" value="1"/>
</dbReference>
<dbReference type="PROSITE" id="PS51194">
    <property type="entry name" value="HELICASE_CTER"/>
    <property type="match status" value="1"/>
</dbReference>
<dbReference type="PROSITE" id="PS51195">
    <property type="entry name" value="Q_MOTIF"/>
    <property type="match status" value="1"/>
</dbReference>
<feature type="chain" id="PRO_0000232297" description="ATP-dependent RNA helicase DBP6">
    <location>
        <begin position="1"/>
        <end position="607"/>
    </location>
</feature>
<feature type="domain" description="Helicase ATP-binding" evidence="2">
    <location>
        <begin position="228"/>
        <end position="412"/>
    </location>
</feature>
<feature type="domain" description="Helicase C-terminal" evidence="3">
    <location>
        <begin position="441"/>
        <end position="592"/>
    </location>
</feature>
<feature type="region of interest" description="Disordered" evidence="4">
    <location>
        <begin position="1"/>
        <end position="124"/>
    </location>
</feature>
<feature type="short sequence motif" description="Q motif">
    <location>
        <begin position="188"/>
        <end position="216"/>
    </location>
</feature>
<feature type="short sequence motif" description="DEAD box">
    <location>
        <begin position="346"/>
        <end position="349"/>
    </location>
</feature>
<feature type="compositionally biased region" description="Basic and acidic residues" evidence="4">
    <location>
        <begin position="25"/>
        <end position="43"/>
    </location>
</feature>
<feature type="compositionally biased region" description="Acidic residues" evidence="4">
    <location>
        <begin position="44"/>
        <end position="58"/>
    </location>
</feature>
<feature type="compositionally biased region" description="Acidic residues" evidence="4">
    <location>
        <begin position="67"/>
        <end position="77"/>
    </location>
</feature>
<feature type="binding site" evidence="2">
    <location>
        <begin position="241"/>
        <end position="248"/>
    </location>
    <ligand>
        <name>ATP</name>
        <dbReference type="ChEBI" id="CHEBI:30616"/>
    </ligand>
</feature>
<gene>
    <name type="primary">DBP6</name>
    <name type="ordered locus">YALI0B22572g</name>
</gene>
<sequence length="607" mass="68223">MFTGVRRFDPTQGGQASPVPFKKVKHEEEESKPETNADEHSEVEYEEESGDDSMDEAEEAKKPVEVKDEEESEDENLTADQKRKKKQEAANLAKRAEEKALERKRKREQHMGEEDSDSEDDLAPIKISGNNKIKLAKGTIRAKGFEELPQTEIYEDKPDESATISRKTQLQTQPILRNATYVEIDDVGSFDEFDLSKNMMKNLDTLGYTKAFSVQKAVIPWLLAQQKLLAPDRKPDLLVSASTGSGKTATYGIPIIEKLRDRIVPRIRAVVVLPTKPLVMQVRDVLENLSKGSSLSVVALRNDRSTKRERAVLETADIVVAAPGRLVEQVKENPELFSYIEFLVVDEADRLLGQDYYDWASVLQNNQQRAQAGKTNLTEHYVRNMQTLIFSATLTANPEHIASMDIHNPGVFVIGSSDSYSIPKSLTEIVTHVSAAEKPLMLCELLVQRDINRGVVFTKSSETAARVARMMEIMDADIFHKDWKIAAVSAETSSVHRRRSMKQFIDGKIDFLVCTDLVSRGIDFVVDNVINYDIPSGKREYVHRVGRTARAGREGNAYTFLTGSGEAKWFREIGEFVGRTQEVDATHINSSHNDGYQEALAKLEEEV</sequence>